<sequence length="154" mass="17961">MQGNQAVVDYMNELLSGELAARDQYFIHSRLYSEWGYTKLFERLNHEMEEETTHAEDFIRRILMLGGTPKMARAELNIGTDVVSCLKADLQTEYEVRDALKKGIKLCEEAQDYVTRDLMVAQLKDTEEDHAHWLEQQLRLIELIGEGNYYQSQL</sequence>
<gene>
    <name type="primary">bfrA</name>
    <name type="ordered locus">NMB1207</name>
</gene>
<accession>P0A0R1</accession>
<accession>P72080</accession>
<keyword id="KW-0406">Ion transport</keyword>
<keyword id="KW-0408">Iron</keyword>
<keyword id="KW-0409">Iron storage</keyword>
<keyword id="KW-0410">Iron transport</keyword>
<keyword id="KW-0479">Metal-binding</keyword>
<keyword id="KW-0560">Oxidoreductase</keyword>
<keyword id="KW-1185">Reference proteome</keyword>
<keyword id="KW-0813">Transport</keyword>
<proteinExistence type="inferred from homology"/>
<dbReference type="EC" id="1.16.3.1" evidence="2"/>
<dbReference type="EMBL" id="AE002098">
    <property type="protein sequence ID" value="AAF41589.1"/>
    <property type="molecule type" value="Genomic_DNA"/>
</dbReference>
<dbReference type="PIR" id="F81110">
    <property type="entry name" value="F81110"/>
</dbReference>
<dbReference type="RefSeq" id="NP_274232.1">
    <property type="nucleotide sequence ID" value="NC_003112.2"/>
</dbReference>
<dbReference type="SMR" id="P0A0R1"/>
<dbReference type="STRING" id="122586.NMB1207"/>
<dbReference type="PaxDb" id="122586-NMB1207"/>
<dbReference type="KEGG" id="nme:NMB1207"/>
<dbReference type="PATRIC" id="fig|122586.8.peg.1514"/>
<dbReference type="HOGENOM" id="CLU_104506_2_0_4"/>
<dbReference type="InParanoid" id="P0A0R1"/>
<dbReference type="OrthoDB" id="9800505at2"/>
<dbReference type="Proteomes" id="UP000000425">
    <property type="component" value="Chromosome"/>
</dbReference>
<dbReference type="GO" id="GO:0005829">
    <property type="term" value="C:cytosol"/>
    <property type="evidence" value="ECO:0000318"/>
    <property type="project" value="GO_Central"/>
</dbReference>
<dbReference type="GO" id="GO:0008199">
    <property type="term" value="F:ferric iron binding"/>
    <property type="evidence" value="ECO:0007669"/>
    <property type="project" value="InterPro"/>
</dbReference>
<dbReference type="GO" id="GO:0004322">
    <property type="term" value="F:ferroxidase activity"/>
    <property type="evidence" value="ECO:0000318"/>
    <property type="project" value="GO_Central"/>
</dbReference>
<dbReference type="GO" id="GO:0020037">
    <property type="term" value="F:heme binding"/>
    <property type="evidence" value="ECO:0000318"/>
    <property type="project" value="GO_Central"/>
</dbReference>
<dbReference type="GO" id="GO:0005506">
    <property type="term" value="F:iron ion binding"/>
    <property type="evidence" value="ECO:0000318"/>
    <property type="project" value="GO_Central"/>
</dbReference>
<dbReference type="GO" id="GO:0006879">
    <property type="term" value="P:intracellular iron ion homeostasis"/>
    <property type="evidence" value="ECO:0007669"/>
    <property type="project" value="UniProtKB-KW"/>
</dbReference>
<dbReference type="GO" id="GO:0006826">
    <property type="term" value="P:iron ion transport"/>
    <property type="evidence" value="ECO:0007669"/>
    <property type="project" value="UniProtKB-KW"/>
</dbReference>
<dbReference type="CDD" id="cd00907">
    <property type="entry name" value="Bacterioferritin"/>
    <property type="match status" value="1"/>
</dbReference>
<dbReference type="FunFam" id="1.20.1260.10:FF:000005">
    <property type="entry name" value="Bacterioferritin"/>
    <property type="match status" value="1"/>
</dbReference>
<dbReference type="Gene3D" id="1.20.1260.10">
    <property type="match status" value="1"/>
</dbReference>
<dbReference type="InterPro" id="IPR002024">
    <property type="entry name" value="Bacterioferritin"/>
</dbReference>
<dbReference type="InterPro" id="IPR012347">
    <property type="entry name" value="Ferritin-like"/>
</dbReference>
<dbReference type="InterPro" id="IPR009040">
    <property type="entry name" value="Ferritin-like_diiron"/>
</dbReference>
<dbReference type="InterPro" id="IPR009078">
    <property type="entry name" value="Ferritin-like_SF"/>
</dbReference>
<dbReference type="InterPro" id="IPR008331">
    <property type="entry name" value="Ferritin_DPS_dom"/>
</dbReference>
<dbReference type="NCBIfam" id="TIGR00754">
    <property type="entry name" value="bfr"/>
    <property type="match status" value="1"/>
</dbReference>
<dbReference type="PANTHER" id="PTHR30295">
    <property type="entry name" value="BACTERIOFERRITIN"/>
    <property type="match status" value="1"/>
</dbReference>
<dbReference type="PANTHER" id="PTHR30295:SF9">
    <property type="entry name" value="BACTERIOFERRITIN"/>
    <property type="match status" value="1"/>
</dbReference>
<dbReference type="Pfam" id="PF00210">
    <property type="entry name" value="Ferritin"/>
    <property type="match status" value="1"/>
</dbReference>
<dbReference type="PIRSF" id="PIRSF002560">
    <property type="entry name" value="Bacterioferritin"/>
    <property type="match status" value="1"/>
</dbReference>
<dbReference type="PRINTS" id="PR00601">
    <property type="entry name" value="BACFERRITIN"/>
</dbReference>
<dbReference type="SUPFAM" id="SSF47240">
    <property type="entry name" value="Ferritin-like"/>
    <property type="match status" value="1"/>
</dbReference>
<dbReference type="PROSITE" id="PS00549">
    <property type="entry name" value="BACTERIOFERRITIN"/>
    <property type="match status" value="1"/>
</dbReference>
<dbReference type="PROSITE" id="PS50905">
    <property type="entry name" value="FERRITIN_LIKE"/>
    <property type="match status" value="1"/>
</dbReference>
<evidence type="ECO:0000250" key="1">
    <source>
        <dbReference type="UniProtKB" id="P0A998"/>
    </source>
</evidence>
<evidence type="ECO:0000250" key="2">
    <source>
        <dbReference type="UniProtKB" id="Q9HWF9"/>
    </source>
</evidence>
<evidence type="ECO:0000255" key="3">
    <source>
        <dbReference type="PROSITE-ProRule" id="PRU00085"/>
    </source>
</evidence>
<evidence type="ECO:0000305" key="4"/>
<reference key="1">
    <citation type="journal article" date="2000" name="Science">
        <title>Complete genome sequence of Neisseria meningitidis serogroup B strain MC58.</title>
        <authorList>
            <person name="Tettelin H."/>
            <person name="Saunders N.J."/>
            <person name="Heidelberg J.F."/>
            <person name="Jeffries A.C."/>
            <person name="Nelson K.E."/>
            <person name="Eisen J.A."/>
            <person name="Ketchum K.A."/>
            <person name="Hood D.W."/>
            <person name="Peden J.F."/>
            <person name="Dodson R.J."/>
            <person name="Nelson W.C."/>
            <person name="Gwinn M.L."/>
            <person name="DeBoy R.T."/>
            <person name="Peterson J.D."/>
            <person name="Hickey E.K."/>
            <person name="Haft D.H."/>
            <person name="Salzberg S.L."/>
            <person name="White O."/>
            <person name="Fleischmann R.D."/>
            <person name="Dougherty B.A."/>
            <person name="Mason T.M."/>
            <person name="Ciecko A."/>
            <person name="Parksey D.S."/>
            <person name="Blair E."/>
            <person name="Cittone H."/>
            <person name="Clark E.B."/>
            <person name="Cotton M.D."/>
            <person name="Utterback T.R."/>
            <person name="Khouri H.M."/>
            <person name="Qin H."/>
            <person name="Vamathevan J.J."/>
            <person name="Gill J."/>
            <person name="Scarlato V."/>
            <person name="Masignani V."/>
            <person name="Pizza M."/>
            <person name="Grandi G."/>
            <person name="Sun L."/>
            <person name="Smith H.O."/>
            <person name="Fraser C.M."/>
            <person name="Moxon E.R."/>
            <person name="Rappuoli R."/>
            <person name="Venter J.C."/>
        </authorList>
    </citation>
    <scope>NUCLEOTIDE SEQUENCE [LARGE SCALE GENOMIC DNA]</scope>
    <source>
        <strain>ATCC BAA-335 / MC58</strain>
    </source>
</reference>
<organism>
    <name type="scientific">Neisseria meningitidis serogroup B (strain ATCC BAA-335 / MC58)</name>
    <dbReference type="NCBI Taxonomy" id="122586"/>
    <lineage>
        <taxon>Bacteria</taxon>
        <taxon>Pseudomonadati</taxon>
        <taxon>Pseudomonadota</taxon>
        <taxon>Betaproteobacteria</taxon>
        <taxon>Neisseriales</taxon>
        <taxon>Neisseriaceae</taxon>
        <taxon>Neisseria</taxon>
    </lineage>
</organism>
<feature type="chain" id="PRO_0000192604" description="Bacterial ferritin">
    <location>
        <begin position="1"/>
        <end position="154"/>
    </location>
</feature>
<feature type="domain" description="Ferritin-like diiron" evidence="3">
    <location>
        <begin position="1"/>
        <end position="145"/>
    </location>
</feature>
<feature type="binding site" evidence="3">
    <location>
        <position position="18"/>
    </location>
    <ligand>
        <name>Fe cation</name>
        <dbReference type="ChEBI" id="CHEBI:24875"/>
        <label>1</label>
    </ligand>
</feature>
<feature type="binding site" evidence="3">
    <location>
        <position position="51"/>
    </location>
    <ligand>
        <name>Fe cation</name>
        <dbReference type="ChEBI" id="CHEBI:24875"/>
        <label>1</label>
    </ligand>
</feature>
<feature type="binding site" evidence="3">
    <location>
        <position position="51"/>
    </location>
    <ligand>
        <name>Fe cation</name>
        <dbReference type="ChEBI" id="CHEBI:24875"/>
        <label>2</label>
    </ligand>
</feature>
<feature type="binding site" evidence="3">
    <location>
        <position position="54"/>
    </location>
    <ligand>
        <name>Fe cation</name>
        <dbReference type="ChEBI" id="CHEBI:24875"/>
        <label>1</label>
    </ligand>
</feature>
<feature type="binding site" evidence="3">
    <location>
        <position position="93"/>
    </location>
    <ligand>
        <name>Fe cation</name>
        <dbReference type="ChEBI" id="CHEBI:24875"/>
        <label>2</label>
    </ligand>
</feature>
<feature type="binding site" evidence="3">
    <location>
        <position position="127"/>
    </location>
    <ligand>
        <name>Fe cation</name>
        <dbReference type="ChEBI" id="CHEBI:24875"/>
        <label>1</label>
    </ligand>
</feature>
<feature type="binding site" evidence="3">
    <location>
        <position position="127"/>
    </location>
    <ligand>
        <name>Fe cation</name>
        <dbReference type="ChEBI" id="CHEBI:24875"/>
        <label>2</label>
    </ligand>
</feature>
<feature type="binding site" evidence="3">
    <location>
        <position position="130"/>
    </location>
    <ligand>
        <name>Fe cation</name>
        <dbReference type="ChEBI" id="CHEBI:24875"/>
        <label>2</label>
    </ligand>
</feature>
<comment type="function">
    <text evidence="2">Iron-storage protein, whose ferroxidase center binds Fe(2+), oxidizes it using dioxygen to Fe(3+), and participates in the subsequent Fe(3+) oxide mineral core formation within the central cavity of the BFR protein shell.</text>
</comment>
<comment type="catalytic activity">
    <reaction evidence="2">
        <text>4 Fe(2+) + O2 + 4 H(+) = 4 Fe(3+) + 2 H2O</text>
        <dbReference type="Rhea" id="RHEA:11148"/>
        <dbReference type="ChEBI" id="CHEBI:15377"/>
        <dbReference type="ChEBI" id="CHEBI:15378"/>
        <dbReference type="ChEBI" id="CHEBI:15379"/>
        <dbReference type="ChEBI" id="CHEBI:29033"/>
        <dbReference type="ChEBI" id="CHEBI:29034"/>
        <dbReference type="EC" id="1.16.3.1"/>
    </reaction>
</comment>
<comment type="catalytic activity">
    <reaction evidence="2">
        <text>Fe(2+)(in) = Fe(2+)(out)</text>
        <dbReference type="Rhea" id="RHEA:28486"/>
        <dbReference type="ChEBI" id="CHEBI:29033"/>
    </reaction>
</comment>
<comment type="subunit">
    <text evidence="2">Heterooligomer of 24 subunits, arranged as 12 dimers, that are packed together to form an approximately spherical molecule with a central cavity, in which large amounts of iron can be deposited.</text>
</comment>
<comment type="similarity">
    <text evidence="4">Belongs to the bacterioferritin family.</text>
</comment>
<comment type="caution">
    <text evidence="4">This protein does not have the conserved Met residue required for heme-binding, instead it has Thr-52. The heme-binding subunit is probably BfrB (Probable).</text>
</comment>
<name>FTNA_NEIMB</name>
<protein>
    <recommendedName>
        <fullName evidence="2">Bacterial ferritin</fullName>
        <ecNumber evidence="2">1.16.3.1</ecNumber>
    </recommendedName>
    <alternativeName>
        <fullName evidence="1">Bacterial non-heme ferritin</fullName>
    </alternativeName>
    <alternativeName>
        <fullName>Bacterioferritin A</fullName>
        <shortName>BFR A</shortName>
    </alternativeName>
</protein>